<name>IF3_BARQU</name>
<proteinExistence type="inferred from homology"/>
<feature type="chain" id="PRO_0000177485" description="Translation initiation factor IF-3">
    <location>
        <begin position="1"/>
        <end position="172"/>
    </location>
</feature>
<protein>
    <recommendedName>
        <fullName evidence="1">Translation initiation factor IF-3</fullName>
    </recommendedName>
</protein>
<organism>
    <name type="scientific">Bartonella quintana (strain Toulouse)</name>
    <name type="common">Rochalimaea quintana</name>
    <dbReference type="NCBI Taxonomy" id="283165"/>
    <lineage>
        <taxon>Bacteria</taxon>
        <taxon>Pseudomonadati</taxon>
        <taxon>Pseudomonadota</taxon>
        <taxon>Alphaproteobacteria</taxon>
        <taxon>Hyphomicrobiales</taxon>
        <taxon>Bartonellaceae</taxon>
        <taxon>Bartonella</taxon>
    </lineage>
</organism>
<sequence length="172" mass="19468">MTPTQKDGPRSNQDIRVPCVQLINDEGQHQGVVATQEALAMAAEVGLDLVEIVPNTEPPVCKIIDLGKLKYQTQKKAAEIRKKQKVIEIKEIKMRPNVDVHDYEVKLKAIHRFIGNGDKVKITLRFRGREMAHQDLGLKLLQRVKEDTSEIAKIEAEPKLEGRQMMMVIAPK</sequence>
<accession>Q6G1I3</accession>
<comment type="function">
    <text evidence="1">IF-3 binds to the 30S ribosomal subunit and shifts the equilibrium between 70S ribosomes and their 50S and 30S subunits in favor of the free subunits, thus enhancing the availability of 30S subunits on which protein synthesis initiation begins.</text>
</comment>
<comment type="subunit">
    <text evidence="1">Monomer.</text>
</comment>
<comment type="subcellular location">
    <subcellularLocation>
        <location evidence="1">Cytoplasm</location>
    </subcellularLocation>
</comment>
<comment type="similarity">
    <text evidence="1">Belongs to the IF-3 family.</text>
</comment>
<keyword id="KW-0963">Cytoplasm</keyword>
<keyword id="KW-0396">Initiation factor</keyword>
<keyword id="KW-0648">Protein biosynthesis</keyword>
<reference key="1">
    <citation type="journal article" date="2004" name="Proc. Natl. Acad. Sci. U.S.A.">
        <title>The louse-borne human pathogen Bartonella quintana is a genomic derivative of the zoonotic agent Bartonella henselae.</title>
        <authorList>
            <person name="Alsmark U.C.M."/>
            <person name="Frank A.C."/>
            <person name="Karlberg E.O."/>
            <person name="Legault B.-A."/>
            <person name="Ardell D.H."/>
            <person name="Canbaeck B."/>
            <person name="Eriksson A.-S."/>
            <person name="Naeslund A.K."/>
            <person name="Handley S.A."/>
            <person name="Huvet M."/>
            <person name="La Scola B."/>
            <person name="Holmberg M."/>
            <person name="Andersson S.G.E."/>
        </authorList>
    </citation>
    <scope>NUCLEOTIDE SEQUENCE [LARGE SCALE GENOMIC DNA]</scope>
    <source>
        <strain>Toulouse</strain>
    </source>
</reference>
<dbReference type="EMBL" id="BX897700">
    <property type="protein sequence ID" value="CAF25550.1"/>
    <property type="molecule type" value="Genomic_DNA"/>
</dbReference>
<dbReference type="RefSeq" id="WP_011178878.1">
    <property type="nucleotide sequence ID" value="NC_005955.1"/>
</dbReference>
<dbReference type="SMR" id="Q6G1I3"/>
<dbReference type="GeneID" id="56532434"/>
<dbReference type="KEGG" id="bqu:BQ00430"/>
<dbReference type="eggNOG" id="COG0290">
    <property type="taxonomic scope" value="Bacteria"/>
</dbReference>
<dbReference type="HOGENOM" id="CLU_054919_3_2_5"/>
<dbReference type="OrthoDB" id="9806014at2"/>
<dbReference type="Proteomes" id="UP000000597">
    <property type="component" value="Chromosome"/>
</dbReference>
<dbReference type="GO" id="GO:0005829">
    <property type="term" value="C:cytosol"/>
    <property type="evidence" value="ECO:0007669"/>
    <property type="project" value="TreeGrafter"/>
</dbReference>
<dbReference type="GO" id="GO:0016020">
    <property type="term" value="C:membrane"/>
    <property type="evidence" value="ECO:0007669"/>
    <property type="project" value="TreeGrafter"/>
</dbReference>
<dbReference type="GO" id="GO:0043022">
    <property type="term" value="F:ribosome binding"/>
    <property type="evidence" value="ECO:0007669"/>
    <property type="project" value="TreeGrafter"/>
</dbReference>
<dbReference type="GO" id="GO:0003743">
    <property type="term" value="F:translation initiation factor activity"/>
    <property type="evidence" value="ECO:0007669"/>
    <property type="project" value="UniProtKB-UniRule"/>
</dbReference>
<dbReference type="GO" id="GO:0032790">
    <property type="term" value="P:ribosome disassembly"/>
    <property type="evidence" value="ECO:0007669"/>
    <property type="project" value="TreeGrafter"/>
</dbReference>
<dbReference type="FunFam" id="3.30.110.10:FF:000001">
    <property type="entry name" value="Translation initiation factor IF-3"/>
    <property type="match status" value="1"/>
</dbReference>
<dbReference type="Gene3D" id="3.30.110.10">
    <property type="entry name" value="Translation initiation factor 3 (IF-3), C-terminal domain"/>
    <property type="match status" value="1"/>
</dbReference>
<dbReference type="Gene3D" id="3.10.20.80">
    <property type="entry name" value="Translation initiation factor 3 (IF-3), N-terminal domain"/>
    <property type="match status" value="1"/>
</dbReference>
<dbReference type="HAMAP" id="MF_00080">
    <property type="entry name" value="IF_3"/>
    <property type="match status" value="1"/>
</dbReference>
<dbReference type="InterPro" id="IPR036788">
    <property type="entry name" value="T_IF-3_C_sf"/>
</dbReference>
<dbReference type="InterPro" id="IPR036787">
    <property type="entry name" value="T_IF-3_N_sf"/>
</dbReference>
<dbReference type="InterPro" id="IPR001288">
    <property type="entry name" value="Translation_initiation_fac_3"/>
</dbReference>
<dbReference type="InterPro" id="IPR019815">
    <property type="entry name" value="Translation_initiation_fac_3_C"/>
</dbReference>
<dbReference type="InterPro" id="IPR019814">
    <property type="entry name" value="Translation_initiation_fac_3_N"/>
</dbReference>
<dbReference type="NCBIfam" id="TIGR00168">
    <property type="entry name" value="infC"/>
    <property type="match status" value="1"/>
</dbReference>
<dbReference type="PANTHER" id="PTHR10938">
    <property type="entry name" value="TRANSLATION INITIATION FACTOR IF-3"/>
    <property type="match status" value="1"/>
</dbReference>
<dbReference type="PANTHER" id="PTHR10938:SF0">
    <property type="entry name" value="TRANSLATION INITIATION FACTOR IF-3, MITOCHONDRIAL"/>
    <property type="match status" value="1"/>
</dbReference>
<dbReference type="Pfam" id="PF00707">
    <property type="entry name" value="IF3_C"/>
    <property type="match status" value="1"/>
</dbReference>
<dbReference type="Pfam" id="PF05198">
    <property type="entry name" value="IF3_N"/>
    <property type="match status" value="1"/>
</dbReference>
<dbReference type="SUPFAM" id="SSF55200">
    <property type="entry name" value="Translation initiation factor IF3, C-terminal domain"/>
    <property type="match status" value="1"/>
</dbReference>
<dbReference type="SUPFAM" id="SSF54364">
    <property type="entry name" value="Translation initiation factor IF3, N-terminal domain"/>
    <property type="match status" value="1"/>
</dbReference>
<evidence type="ECO:0000255" key="1">
    <source>
        <dbReference type="HAMAP-Rule" id="MF_00080"/>
    </source>
</evidence>
<gene>
    <name evidence="1" type="primary">infC</name>
    <name type="ordered locus">BQ00430</name>
</gene>